<sequence length="436" mass="46583">MGQVLPLVTRQGDRIAIVSGLRTPFARQATAFHGIPAVDLGKMVVGELLARTEIPAEVIEQLVFGQVVQMPEAPNIAREIVLGTGMNVHTDAYSVSRACATSFQAVANVAESLMAGTIRAGIAGGADSSSVLPIGVSKKLARVLVDVNKARTMSQRLKLFSRLRLRDLMPVPPAVAEYSTGLRMGDTAEQMAKTYGITREQQDALAHRSHQRAAQAWSEGKLKEEVMTAFIPPYKQPLVEDNNIRGNSSLADYAKLRPAFDRKHGTVTAANSTPLTDGAAAVILMTESRAKELGLVPLGYLRSYAFTAIDVWQDMLLGPAWSTPLALERAGLTMGDLTLIDMHEAFAAQTLANIQLLGSERFARDVLGRAHATGEVDESKFNVLGGSIAYGHPFAATGARMITQTLYELRRRGGGFGLVTACAAGGLGAAMVLEAE</sequence>
<gene>
    <name evidence="1" type="primary">fadI</name>
    <name type="ordered locus">ECED1_2805</name>
</gene>
<dbReference type="EC" id="2.3.1.16" evidence="1"/>
<dbReference type="EMBL" id="CU928162">
    <property type="protein sequence ID" value="CAR08983.2"/>
    <property type="molecule type" value="Genomic_DNA"/>
</dbReference>
<dbReference type="RefSeq" id="WP_000531978.1">
    <property type="nucleotide sequence ID" value="NC_011745.1"/>
</dbReference>
<dbReference type="SMR" id="B7MY17"/>
<dbReference type="KEGG" id="ecq:ECED1_2805"/>
<dbReference type="HOGENOM" id="CLU_031026_2_0_6"/>
<dbReference type="UniPathway" id="UPA00659"/>
<dbReference type="Proteomes" id="UP000000748">
    <property type="component" value="Chromosome"/>
</dbReference>
<dbReference type="GO" id="GO:0005829">
    <property type="term" value="C:cytosol"/>
    <property type="evidence" value="ECO:0007669"/>
    <property type="project" value="TreeGrafter"/>
</dbReference>
<dbReference type="GO" id="GO:0003988">
    <property type="term" value="F:acetyl-CoA C-acyltransferase activity"/>
    <property type="evidence" value="ECO:0007669"/>
    <property type="project" value="UniProtKB-UniRule"/>
</dbReference>
<dbReference type="GO" id="GO:0006635">
    <property type="term" value="P:fatty acid beta-oxidation"/>
    <property type="evidence" value="ECO:0007669"/>
    <property type="project" value="UniProtKB-UniRule"/>
</dbReference>
<dbReference type="CDD" id="cd00751">
    <property type="entry name" value="thiolase"/>
    <property type="match status" value="1"/>
</dbReference>
<dbReference type="FunFam" id="3.40.47.10:FF:000011">
    <property type="entry name" value="3-ketoacyl-CoA thiolase"/>
    <property type="match status" value="1"/>
</dbReference>
<dbReference type="Gene3D" id="3.40.47.10">
    <property type="match status" value="1"/>
</dbReference>
<dbReference type="HAMAP" id="MF_01618">
    <property type="entry name" value="FadI"/>
    <property type="match status" value="1"/>
</dbReference>
<dbReference type="InterPro" id="IPR012806">
    <property type="entry name" value="Ac-CoA_C-AcTrfase_FadI"/>
</dbReference>
<dbReference type="InterPro" id="IPR002155">
    <property type="entry name" value="Thiolase"/>
</dbReference>
<dbReference type="InterPro" id="IPR016039">
    <property type="entry name" value="Thiolase-like"/>
</dbReference>
<dbReference type="InterPro" id="IPR020615">
    <property type="entry name" value="Thiolase_acyl_enz_int_AS"/>
</dbReference>
<dbReference type="InterPro" id="IPR020610">
    <property type="entry name" value="Thiolase_AS"/>
</dbReference>
<dbReference type="InterPro" id="IPR020617">
    <property type="entry name" value="Thiolase_C"/>
</dbReference>
<dbReference type="InterPro" id="IPR020613">
    <property type="entry name" value="Thiolase_CS"/>
</dbReference>
<dbReference type="InterPro" id="IPR020616">
    <property type="entry name" value="Thiolase_N"/>
</dbReference>
<dbReference type="NCBIfam" id="TIGR01930">
    <property type="entry name" value="AcCoA-C-Actrans"/>
    <property type="match status" value="1"/>
</dbReference>
<dbReference type="NCBIfam" id="TIGR02446">
    <property type="entry name" value="FadI"/>
    <property type="match status" value="1"/>
</dbReference>
<dbReference type="NCBIfam" id="NF006516">
    <property type="entry name" value="PRK08963.1"/>
    <property type="match status" value="1"/>
</dbReference>
<dbReference type="PANTHER" id="PTHR18919:SF107">
    <property type="entry name" value="ACETYL-COA ACETYLTRANSFERASE, CYTOSOLIC"/>
    <property type="match status" value="1"/>
</dbReference>
<dbReference type="PANTHER" id="PTHR18919">
    <property type="entry name" value="ACETYL-COA C-ACYLTRANSFERASE"/>
    <property type="match status" value="1"/>
</dbReference>
<dbReference type="Pfam" id="PF02803">
    <property type="entry name" value="Thiolase_C"/>
    <property type="match status" value="1"/>
</dbReference>
<dbReference type="Pfam" id="PF00108">
    <property type="entry name" value="Thiolase_N"/>
    <property type="match status" value="1"/>
</dbReference>
<dbReference type="PIRSF" id="PIRSF000429">
    <property type="entry name" value="Ac-CoA_Ac_transf"/>
    <property type="match status" value="1"/>
</dbReference>
<dbReference type="SUPFAM" id="SSF53901">
    <property type="entry name" value="Thiolase-like"/>
    <property type="match status" value="2"/>
</dbReference>
<dbReference type="PROSITE" id="PS00098">
    <property type="entry name" value="THIOLASE_1"/>
    <property type="match status" value="1"/>
</dbReference>
<dbReference type="PROSITE" id="PS00737">
    <property type="entry name" value="THIOLASE_2"/>
    <property type="match status" value="1"/>
</dbReference>
<dbReference type="PROSITE" id="PS00099">
    <property type="entry name" value="THIOLASE_3"/>
    <property type="match status" value="1"/>
</dbReference>
<proteinExistence type="inferred from homology"/>
<name>FADI_ECO81</name>
<protein>
    <recommendedName>
        <fullName evidence="1">3-ketoacyl-CoA thiolase</fullName>
        <ecNumber evidence="1">2.3.1.16</ecNumber>
    </recommendedName>
    <alternativeName>
        <fullName evidence="1">ACSs</fullName>
    </alternativeName>
    <alternativeName>
        <fullName evidence="1">Acetyl-CoA acyltransferase</fullName>
    </alternativeName>
    <alternativeName>
        <fullName evidence="1">Acyl-CoA ligase</fullName>
    </alternativeName>
    <alternativeName>
        <fullName evidence="1">Beta-ketothiolase</fullName>
    </alternativeName>
    <alternativeName>
        <fullName evidence="1">Fatty acid oxidation complex subunit beta</fullName>
    </alternativeName>
</protein>
<feature type="chain" id="PRO_1000185962" description="3-ketoacyl-CoA thiolase">
    <location>
        <begin position="1"/>
        <end position="436"/>
    </location>
</feature>
<feature type="active site" description="Acyl-thioester intermediate" evidence="1">
    <location>
        <position position="99"/>
    </location>
</feature>
<feature type="active site" description="Proton acceptor" evidence="1">
    <location>
        <position position="392"/>
    </location>
</feature>
<feature type="active site" description="Proton acceptor" evidence="1">
    <location>
        <position position="422"/>
    </location>
</feature>
<evidence type="ECO:0000255" key="1">
    <source>
        <dbReference type="HAMAP-Rule" id="MF_01618"/>
    </source>
</evidence>
<reference key="1">
    <citation type="journal article" date="2009" name="PLoS Genet.">
        <title>Organised genome dynamics in the Escherichia coli species results in highly diverse adaptive paths.</title>
        <authorList>
            <person name="Touchon M."/>
            <person name="Hoede C."/>
            <person name="Tenaillon O."/>
            <person name="Barbe V."/>
            <person name="Baeriswyl S."/>
            <person name="Bidet P."/>
            <person name="Bingen E."/>
            <person name="Bonacorsi S."/>
            <person name="Bouchier C."/>
            <person name="Bouvet O."/>
            <person name="Calteau A."/>
            <person name="Chiapello H."/>
            <person name="Clermont O."/>
            <person name="Cruveiller S."/>
            <person name="Danchin A."/>
            <person name="Diard M."/>
            <person name="Dossat C."/>
            <person name="Karoui M.E."/>
            <person name="Frapy E."/>
            <person name="Garry L."/>
            <person name="Ghigo J.M."/>
            <person name="Gilles A.M."/>
            <person name="Johnson J."/>
            <person name="Le Bouguenec C."/>
            <person name="Lescat M."/>
            <person name="Mangenot S."/>
            <person name="Martinez-Jehanne V."/>
            <person name="Matic I."/>
            <person name="Nassif X."/>
            <person name="Oztas S."/>
            <person name="Petit M.A."/>
            <person name="Pichon C."/>
            <person name="Rouy Z."/>
            <person name="Ruf C.S."/>
            <person name="Schneider D."/>
            <person name="Tourret J."/>
            <person name="Vacherie B."/>
            <person name="Vallenet D."/>
            <person name="Medigue C."/>
            <person name="Rocha E.P.C."/>
            <person name="Denamur E."/>
        </authorList>
    </citation>
    <scope>NUCLEOTIDE SEQUENCE [LARGE SCALE GENOMIC DNA]</scope>
    <source>
        <strain>ED1a</strain>
    </source>
</reference>
<organism>
    <name type="scientific">Escherichia coli O81 (strain ED1a)</name>
    <dbReference type="NCBI Taxonomy" id="585397"/>
    <lineage>
        <taxon>Bacteria</taxon>
        <taxon>Pseudomonadati</taxon>
        <taxon>Pseudomonadota</taxon>
        <taxon>Gammaproteobacteria</taxon>
        <taxon>Enterobacterales</taxon>
        <taxon>Enterobacteriaceae</taxon>
        <taxon>Escherichia</taxon>
    </lineage>
</organism>
<accession>B7MY17</accession>
<comment type="function">
    <text evidence="1">Catalyzes the final step of fatty acid oxidation in which acetyl-CoA is released and the CoA ester of a fatty acid two carbons shorter is formed.</text>
</comment>
<comment type="catalytic activity">
    <reaction evidence="1">
        <text>an acyl-CoA + acetyl-CoA = a 3-oxoacyl-CoA + CoA</text>
        <dbReference type="Rhea" id="RHEA:21564"/>
        <dbReference type="ChEBI" id="CHEBI:57287"/>
        <dbReference type="ChEBI" id="CHEBI:57288"/>
        <dbReference type="ChEBI" id="CHEBI:58342"/>
        <dbReference type="ChEBI" id="CHEBI:90726"/>
        <dbReference type="EC" id="2.3.1.16"/>
    </reaction>
</comment>
<comment type="pathway">
    <text evidence="1">Lipid metabolism; fatty acid beta-oxidation.</text>
</comment>
<comment type="subunit">
    <text evidence="1">Heterotetramer of two alpha chains (FadJ) and two beta chains (FadI).</text>
</comment>
<comment type="subcellular location">
    <subcellularLocation>
        <location evidence="1">Cytoplasm</location>
    </subcellularLocation>
</comment>
<comment type="similarity">
    <text evidence="1">Belongs to the thiolase-like superfamily. Thiolase family.</text>
</comment>
<keyword id="KW-0012">Acyltransferase</keyword>
<keyword id="KW-0963">Cytoplasm</keyword>
<keyword id="KW-0276">Fatty acid metabolism</keyword>
<keyword id="KW-0442">Lipid degradation</keyword>
<keyword id="KW-0443">Lipid metabolism</keyword>
<keyword id="KW-0808">Transferase</keyword>